<accession>P9WGW9</accession>
<accession>E7E4Z6</accession>
<accession>O53597</accession>
<sequence>MSPIEPAASAIFGPRLGLARRYAEALAGPGVERGLVGPREVGRLWDRHLLNCAVIGELLERGDRVVDIGSGAGLPGVPLAIARPDLQVVLLEPLLRRTEFLREMVTDLGVAVEIVRGRAEESWVQDQLGGSDAAVSRAVAALDKLTKWSMPLIRPNGRMLAIKGERAHDEVREHRRVMIASGAVDVRVVTCGANYLRPPATVVFARRGKQIARGSARMASGGTA</sequence>
<evidence type="ECO:0000255" key="1">
    <source>
        <dbReference type="HAMAP-Rule" id="MF_00074"/>
    </source>
</evidence>
<evidence type="ECO:0000269" key="2">
    <source>
    </source>
</evidence>
<evidence type="ECO:0007829" key="3">
    <source>
        <dbReference type="PDB" id="7CFE"/>
    </source>
</evidence>
<comment type="function">
    <text evidence="1">Specifically methylates the N7 position of guanine in position 518 of 16S rRNA.</text>
</comment>
<comment type="subcellular location">
    <subcellularLocation>
        <location evidence="1">Cytoplasm</location>
    </subcellularLocation>
</comment>
<comment type="disruption phenotype">
    <text evidence="2">Confers low-level streptomycin resistance. Seems to be an important cause of resistance in resistant M.tuberculosis isolates.</text>
</comment>
<comment type="similarity">
    <text evidence="1">Belongs to the methyltransferase superfamily. RNA methyltransferase RsmG family.</text>
</comment>
<gene>
    <name evidence="1" type="primary">rsmG</name>
    <name type="synonym">gidB</name>
    <name type="ordered locus">Rv3919c</name>
    <name type="ORF">MTV028.10c</name>
</gene>
<protein>
    <recommendedName>
        <fullName evidence="1">Ribosomal RNA small subunit methyltransferase G</fullName>
        <ecNumber evidence="1">2.1.1.-</ecNumber>
    </recommendedName>
    <alternativeName>
        <fullName evidence="1">16S rRNA 7-methylguanosine methyltransferase</fullName>
        <shortName evidence="1">16S rRNA m7G methyltransferase</shortName>
    </alternativeName>
    <alternativeName>
        <fullName>Glucose-inhibited division protein B</fullName>
    </alternativeName>
</protein>
<feature type="chain" id="PRO_0000184283" description="Ribosomal RNA small subunit methyltransferase G">
    <location>
        <begin position="1"/>
        <end position="224"/>
    </location>
</feature>
<feature type="binding site" evidence="1">
    <location>
        <position position="69"/>
    </location>
    <ligand>
        <name>S-adenosyl-L-methionine</name>
        <dbReference type="ChEBI" id="CHEBI:59789"/>
    </ligand>
</feature>
<feature type="binding site" evidence="1">
    <location>
        <position position="74"/>
    </location>
    <ligand>
        <name>S-adenosyl-L-methionine</name>
        <dbReference type="ChEBI" id="CHEBI:59789"/>
    </ligand>
</feature>
<feature type="binding site" evidence="1">
    <location>
        <begin position="119"/>
        <end position="120"/>
    </location>
    <ligand>
        <name>S-adenosyl-L-methionine</name>
        <dbReference type="ChEBI" id="CHEBI:59789"/>
    </ligand>
</feature>
<feature type="binding site" evidence="1">
    <location>
        <position position="137"/>
    </location>
    <ligand>
        <name>S-adenosyl-L-methionine</name>
        <dbReference type="ChEBI" id="CHEBI:59789"/>
    </ligand>
</feature>
<feature type="helix" evidence="3">
    <location>
        <begin position="7"/>
        <end position="12"/>
    </location>
</feature>
<feature type="helix" evidence="3">
    <location>
        <begin position="13"/>
        <end position="15"/>
    </location>
</feature>
<feature type="helix" evidence="3">
    <location>
        <begin position="16"/>
        <end position="27"/>
    </location>
</feature>
<feature type="helix" evidence="3">
    <location>
        <begin position="29"/>
        <end position="32"/>
    </location>
</feature>
<feature type="helix" evidence="3">
    <location>
        <begin position="38"/>
        <end position="43"/>
    </location>
</feature>
<feature type="helix" evidence="3">
    <location>
        <begin position="44"/>
        <end position="48"/>
    </location>
</feature>
<feature type="helix" evidence="3">
    <location>
        <begin position="49"/>
        <end position="53"/>
    </location>
</feature>
<feature type="helix" evidence="3">
    <location>
        <begin position="54"/>
        <end position="58"/>
    </location>
</feature>
<feature type="strand" evidence="3">
    <location>
        <begin position="64"/>
        <end position="68"/>
    </location>
</feature>
<feature type="turn" evidence="3">
    <location>
        <begin position="71"/>
        <end position="75"/>
    </location>
</feature>
<feature type="helix" evidence="3">
    <location>
        <begin position="76"/>
        <end position="82"/>
    </location>
</feature>
<feature type="strand" evidence="3">
    <location>
        <begin position="87"/>
        <end position="91"/>
    </location>
</feature>
<feature type="helix" evidence="3">
    <location>
        <begin position="95"/>
        <end position="106"/>
    </location>
</feature>
<feature type="strand" evidence="3">
    <location>
        <begin position="112"/>
        <end position="115"/>
    </location>
</feature>
<feature type="helix" evidence="3">
    <location>
        <begin position="122"/>
        <end position="128"/>
    </location>
</feature>
<feature type="strand" evidence="3">
    <location>
        <begin position="131"/>
        <end position="140"/>
    </location>
</feature>
<feature type="helix" evidence="3">
    <location>
        <begin position="142"/>
        <end position="149"/>
    </location>
</feature>
<feature type="helix" evidence="3">
    <location>
        <begin position="150"/>
        <end position="152"/>
    </location>
</feature>
<feature type="strand" evidence="3">
    <location>
        <begin position="153"/>
        <end position="162"/>
    </location>
</feature>
<feature type="helix" evidence="3">
    <location>
        <begin position="164"/>
        <end position="166"/>
    </location>
</feature>
<feature type="helix" evidence="3">
    <location>
        <begin position="167"/>
        <end position="180"/>
    </location>
</feature>
<feature type="strand" evidence="3">
    <location>
        <begin position="183"/>
        <end position="191"/>
    </location>
</feature>
<feature type="turn" evidence="3">
    <location>
        <begin position="193"/>
        <end position="195"/>
    </location>
</feature>
<feature type="strand" evidence="3">
    <location>
        <begin position="200"/>
        <end position="207"/>
    </location>
</feature>
<dbReference type="EC" id="2.1.1.-" evidence="1"/>
<dbReference type="EMBL" id="HQ611141">
    <property type="protein sequence ID" value="ADU15870.1"/>
    <property type="molecule type" value="Genomic_DNA"/>
</dbReference>
<dbReference type="EMBL" id="AL123456">
    <property type="protein sequence ID" value="CCP46748.1"/>
    <property type="molecule type" value="Genomic_DNA"/>
</dbReference>
<dbReference type="PIR" id="G70851">
    <property type="entry name" value="G70851"/>
</dbReference>
<dbReference type="RefSeq" id="NP_218436.2">
    <property type="nucleotide sequence ID" value="NC_000962.3"/>
</dbReference>
<dbReference type="RefSeq" id="WP_003899763.1">
    <property type="nucleotide sequence ID" value="NZ_NVQJ01000005.1"/>
</dbReference>
<dbReference type="PDB" id="7CFE">
    <property type="method" value="X-ray"/>
    <property type="resolution" value="2.02 A"/>
    <property type="chains" value="A=1-224"/>
</dbReference>
<dbReference type="PDBsum" id="7CFE"/>
<dbReference type="SMR" id="P9WGW9"/>
<dbReference type="FunCoup" id="P9WGW9">
    <property type="interactions" value="26"/>
</dbReference>
<dbReference type="STRING" id="83332.Rv3919c"/>
<dbReference type="PaxDb" id="83332-Rv3919c"/>
<dbReference type="DNASU" id="886243"/>
<dbReference type="GeneID" id="45427919"/>
<dbReference type="GeneID" id="886243"/>
<dbReference type="KEGG" id="mtu:Rv3919c"/>
<dbReference type="KEGG" id="mtv:RVBD_3919c"/>
<dbReference type="PATRIC" id="fig|83332.111.peg.4365"/>
<dbReference type="TubercuList" id="Rv3919c"/>
<dbReference type="eggNOG" id="COG0357">
    <property type="taxonomic scope" value="Bacteria"/>
</dbReference>
<dbReference type="InParanoid" id="P9WGW9"/>
<dbReference type="OrthoDB" id="9808773at2"/>
<dbReference type="Proteomes" id="UP000001584">
    <property type="component" value="Chromosome"/>
</dbReference>
<dbReference type="GO" id="GO:0005829">
    <property type="term" value="C:cytosol"/>
    <property type="evidence" value="ECO:0000318"/>
    <property type="project" value="GO_Central"/>
</dbReference>
<dbReference type="GO" id="GO:0005886">
    <property type="term" value="C:plasma membrane"/>
    <property type="evidence" value="ECO:0007005"/>
    <property type="project" value="MTBBASE"/>
</dbReference>
<dbReference type="GO" id="GO:0070043">
    <property type="term" value="F:rRNA (guanine-N7-)-methyltransferase activity"/>
    <property type="evidence" value="ECO:0000318"/>
    <property type="project" value="GO_Central"/>
</dbReference>
<dbReference type="FunFam" id="3.40.50.150:FF:000117">
    <property type="entry name" value="Ribosomal RNA small subunit methyltransferase G"/>
    <property type="match status" value="1"/>
</dbReference>
<dbReference type="Gene3D" id="3.40.50.150">
    <property type="entry name" value="Vaccinia Virus protein VP39"/>
    <property type="match status" value="1"/>
</dbReference>
<dbReference type="HAMAP" id="MF_00074">
    <property type="entry name" value="16SrRNA_methyltr_G"/>
    <property type="match status" value="1"/>
</dbReference>
<dbReference type="InterPro" id="IPR003682">
    <property type="entry name" value="rRNA_ssu_MeTfrase_G"/>
</dbReference>
<dbReference type="InterPro" id="IPR029063">
    <property type="entry name" value="SAM-dependent_MTases_sf"/>
</dbReference>
<dbReference type="NCBIfam" id="TIGR00138">
    <property type="entry name" value="rsmG_gidB"/>
    <property type="match status" value="1"/>
</dbReference>
<dbReference type="PANTHER" id="PTHR31760">
    <property type="entry name" value="S-ADENOSYL-L-METHIONINE-DEPENDENT METHYLTRANSFERASES SUPERFAMILY PROTEIN"/>
    <property type="match status" value="1"/>
</dbReference>
<dbReference type="PANTHER" id="PTHR31760:SF0">
    <property type="entry name" value="S-ADENOSYL-L-METHIONINE-DEPENDENT METHYLTRANSFERASES SUPERFAMILY PROTEIN"/>
    <property type="match status" value="1"/>
</dbReference>
<dbReference type="Pfam" id="PF02527">
    <property type="entry name" value="GidB"/>
    <property type="match status" value="1"/>
</dbReference>
<dbReference type="PIRSF" id="PIRSF003078">
    <property type="entry name" value="GidB"/>
    <property type="match status" value="1"/>
</dbReference>
<dbReference type="SUPFAM" id="SSF53335">
    <property type="entry name" value="S-adenosyl-L-methionine-dependent methyltransferases"/>
    <property type="match status" value="1"/>
</dbReference>
<reference key="1">
    <citation type="submission" date="2010-11" db="EMBL/GenBank/DDBJ databases">
        <title>Evaluation of alterations responsible for streptomycin resistance in Mycobacterium tuberculosis.</title>
        <authorList>
            <person name="Verma J.S."/>
            <person name="Routela R.S."/>
            <person name="Rawat D.S."/>
            <person name="Das R."/>
            <person name="Manzoor N."/>
            <person name="Nair D."/>
        </authorList>
    </citation>
    <scope>NUCLEOTIDE SEQUENCE [GENOMIC DNA]</scope>
    <source>
        <strain>MP 31</strain>
    </source>
</reference>
<reference key="2">
    <citation type="journal article" date="1998" name="Nature">
        <title>Deciphering the biology of Mycobacterium tuberculosis from the complete genome sequence.</title>
        <authorList>
            <person name="Cole S.T."/>
            <person name="Brosch R."/>
            <person name="Parkhill J."/>
            <person name="Garnier T."/>
            <person name="Churcher C.M."/>
            <person name="Harris D.E."/>
            <person name="Gordon S.V."/>
            <person name="Eiglmeier K."/>
            <person name="Gas S."/>
            <person name="Barry C.E. III"/>
            <person name="Tekaia F."/>
            <person name="Badcock K."/>
            <person name="Basham D."/>
            <person name="Brown D."/>
            <person name="Chillingworth T."/>
            <person name="Connor R."/>
            <person name="Davies R.M."/>
            <person name="Devlin K."/>
            <person name="Feltwell T."/>
            <person name="Gentles S."/>
            <person name="Hamlin N."/>
            <person name="Holroyd S."/>
            <person name="Hornsby T."/>
            <person name="Jagels K."/>
            <person name="Krogh A."/>
            <person name="McLean J."/>
            <person name="Moule S."/>
            <person name="Murphy L.D."/>
            <person name="Oliver S."/>
            <person name="Osborne J."/>
            <person name="Quail M.A."/>
            <person name="Rajandream M.A."/>
            <person name="Rogers J."/>
            <person name="Rutter S."/>
            <person name="Seeger K."/>
            <person name="Skelton S."/>
            <person name="Squares S."/>
            <person name="Squares R."/>
            <person name="Sulston J.E."/>
            <person name="Taylor K."/>
            <person name="Whitehead S."/>
            <person name="Barrell B.G."/>
        </authorList>
    </citation>
    <scope>NUCLEOTIDE SEQUENCE [LARGE SCALE GENOMIC DNA]</scope>
    <source>
        <strain>ATCC 25618 / H37Rv</strain>
    </source>
</reference>
<reference key="3">
    <citation type="journal article" date="2007" name="Mol. Microbiol.">
        <title>Loss of a conserved 7-methylguanosine modification in 16S rRNA confers low-level streptomycin resistance in bacteria.</title>
        <authorList>
            <person name="Okamoto S."/>
            <person name="Tamaru A."/>
            <person name="Nakajima C."/>
            <person name="Nishimura K."/>
            <person name="Tanaka Y."/>
            <person name="Tokuyama S."/>
            <person name="Suzuki Y."/>
            <person name="Ochi K."/>
        </authorList>
    </citation>
    <scope>DISRUPTION PHENOTYPE</scope>
</reference>
<reference key="4">
    <citation type="journal article" date="2011" name="Mol. Cell. Proteomics">
        <title>Proteogenomic analysis of Mycobacterium tuberculosis by high resolution mass spectrometry.</title>
        <authorList>
            <person name="Kelkar D.S."/>
            <person name="Kumar D."/>
            <person name="Kumar P."/>
            <person name="Balakrishnan L."/>
            <person name="Muthusamy B."/>
            <person name="Yadav A.K."/>
            <person name="Shrivastava P."/>
            <person name="Marimuthu A."/>
            <person name="Anand S."/>
            <person name="Sundaram H."/>
            <person name="Kingsbury R."/>
            <person name="Harsha H.C."/>
            <person name="Nair B."/>
            <person name="Prasad T.S."/>
            <person name="Chauhan D.S."/>
            <person name="Katoch K."/>
            <person name="Katoch V.M."/>
            <person name="Kumar P."/>
            <person name="Chaerkady R."/>
            <person name="Ramachandran S."/>
            <person name="Dash D."/>
            <person name="Pandey A."/>
        </authorList>
    </citation>
    <scope>IDENTIFICATION BY MASS SPECTROMETRY [LARGE SCALE ANALYSIS]</scope>
    <source>
        <strain>ATCC 25618 / H37Rv</strain>
    </source>
</reference>
<name>RSMG_MYCTU</name>
<keyword id="KW-0002">3D-structure</keyword>
<keyword id="KW-0963">Cytoplasm</keyword>
<keyword id="KW-0489">Methyltransferase</keyword>
<keyword id="KW-1185">Reference proteome</keyword>
<keyword id="KW-0698">rRNA processing</keyword>
<keyword id="KW-0949">S-adenosyl-L-methionine</keyword>
<keyword id="KW-0808">Transferase</keyword>
<proteinExistence type="evidence at protein level"/>
<organism>
    <name type="scientific">Mycobacterium tuberculosis (strain ATCC 25618 / H37Rv)</name>
    <dbReference type="NCBI Taxonomy" id="83332"/>
    <lineage>
        <taxon>Bacteria</taxon>
        <taxon>Bacillati</taxon>
        <taxon>Actinomycetota</taxon>
        <taxon>Actinomycetes</taxon>
        <taxon>Mycobacteriales</taxon>
        <taxon>Mycobacteriaceae</taxon>
        <taxon>Mycobacterium</taxon>
        <taxon>Mycobacterium tuberculosis complex</taxon>
    </lineage>
</organism>